<comment type="function">
    <text evidence="1">Controls the expression of the cellular protein quality control genes clpC, clpE and clpP, as well as mcsA and mcsB, by acting as a repressor of these class III stress genes. After heat shock, CtsR is degraded by the ClpCP and ClpEP proteolytic systems, ensuring the derepression of clpE, clpP and the clpC operon. CtsR negatively autoregulates its own synthesis (By similarity).</text>
</comment>
<comment type="activity regulation">
    <text evidence="2">Repressor activity is controlled via phosphorylation on arginine residues. Unphosphorylated CtsR binds with high affinity to its DNA consensus site and inhibits transcription of downstream genes, whereas the McsB-phosphorylated CtsR repressor is not able to bind to DNA, thus allowing heat-shock gene expression (PubMed:19498169).</text>
</comment>
<comment type="subunit">
    <text evidence="2">Homodimer.</text>
</comment>
<comment type="induction">
    <text evidence="1">CtsR autoinduces its own synthesis by derepression of the clpC operon after heat shock.</text>
</comment>
<comment type="domain">
    <text evidence="2">Is composed of two distinct domains: an N-terminal DNA binding domain that adopts the winged HTH fold (residues 2-72) and a C-terminal dimerization domain (residues 79-153) that consists of four alpha helices organized in a four-helix bundle.</text>
</comment>
<comment type="PTM">
    <text evidence="2">Phosphorylated on Arg-28, Arg-49 and Arg-62 by McsB.</text>
</comment>
<comment type="similarity">
    <text evidence="3">Belongs to the CtsR family.</text>
</comment>
<keyword id="KW-0002">3D-structure</keyword>
<keyword id="KW-0238">DNA-binding</keyword>
<keyword id="KW-0597">Phosphoprotein</keyword>
<keyword id="KW-0678">Repressor</keyword>
<keyword id="KW-0346">Stress response</keyword>
<keyword id="KW-0804">Transcription</keyword>
<keyword id="KW-0805">Transcription regulation</keyword>
<organism>
    <name type="scientific">Geobacillus stearothermophilus</name>
    <name type="common">Bacillus stearothermophilus</name>
    <dbReference type="NCBI Taxonomy" id="1422"/>
    <lineage>
        <taxon>Bacteria</taxon>
        <taxon>Bacillati</taxon>
        <taxon>Bacillota</taxon>
        <taxon>Bacilli</taxon>
        <taxon>Bacillales</taxon>
        <taxon>Anoxybacillaceae</taxon>
        <taxon>Geobacillus</taxon>
    </lineage>
</organism>
<sequence length="153" mass="17872">MPNISDIIEQYLKQVLNMSDQDIVEIKRSEIANKFRCVPSQINYVINTRFTLERGYIVESKRGGGGYIRIMKVKTKSEAQLIDQLLELIDHRISQSSAEDVIKRLMEEKVISEREAKMMLSVMDRSVLYIDLPERDELRARMLKAMLTSLKYK</sequence>
<name>CTSR_GEOSE</name>
<feature type="chain" id="PRO_0000430098" description="Transcriptional regulator CtsR">
    <location>
        <begin position="1"/>
        <end position="153"/>
    </location>
</feature>
<feature type="region of interest" description="Interaction with DNA">
    <location>
        <begin position="4"/>
        <end position="5"/>
    </location>
</feature>
<feature type="region of interest" description="Interaction with DNA">
    <location>
        <begin position="27"/>
        <end position="29"/>
    </location>
</feature>
<feature type="region of interest" description="Interaction with DNA">
    <location>
        <begin position="40"/>
        <end position="44"/>
    </location>
</feature>
<feature type="region of interest" description="Interaction with DNA">
    <location>
        <begin position="60"/>
        <end position="61"/>
    </location>
</feature>
<feature type="site" description="Interaction with DNA">
    <location>
        <position position="49"/>
    </location>
</feature>
<feature type="site" description="Important for DNA binding">
    <location>
        <position position="62"/>
    </location>
</feature>
<feature type="modified residue" description="Phosphoarginine" evidence="2">
    <location>
        <position position="28"/>
    </location>
</feature>
<feature type="modified residue" description="Phosphoarginine" evidence="2">
    <location>
        <position position="49"/>
    </location>
</feature>
<feature type="modified residue" description="Phosphoarginine" evidence="2">
    <location>
        <position position="62"/>
    </location>
</feature>
<feature type="mutagenesis site" description="Loss of the capability to bind DNA." evidence="2">
    <original>R</original>
    <variation>E</variation>
    <location>
        <position position="62"/>
    </location>
</feature>
<feature type="mutagenesis site" description="No alteration of the capability to bind DNA." evidence="2">
    <original>R</original>
    <variation>K</variation>
    <location>
        <position position="62"/>
    </location>
</feature>
<feature type="helix" evidence="4">
    <location>
        <begin position="4"/>
        <end position="16"/>
    </location>
</feature>
<feature type="strand" evidence="4">
    <location>
        <begin position="19"/>
        <end position="26"/>
    </location>
</feature>
<feature type="helix" evidence="4">
    <location>
        <begin position="28"/>
        <end position="34"/>
    </location>
</feature>
<feature type="helix" evidence="4">
    <location>
        <begin position="40"/>
        <end position="49"/>
    </location>
</feature>
<feature type="helix" evidence="4">
    <location>
        <begin position="52"/>
        <end position="54"/>
    </location>
</feature>
<feature type="strand" evidence="4">
    <location>
        <begin position="56"/>
        <end position="61"/>
    </location>
</feature>
<feature type="strand" evidence="4">
    <location>
        <begin position="67"/>
        <end position="75"/>
    </location>
</feature>
<feature type="helix" evidence="4">
    <location>
        <begin position="79"/>
        <end position="86"/>
    </location>
</feature>
<feature type="helix" evidence="4">
    <location>
        <begin position="95"/>
        <end position="107"/>
    </location>
</feature>
<feature type="helix" evidence="4">
    <location>
        <begin position="113"/>
        <end position="122"/>
    </location>
</feature>
<feature type="helix" evidence="4">
    <location>
        <begin position="125"/>
        <end position="128"/>
    </location>
</feature>
<feature type="helix" evidence="4">
    <location>
        <begin position="134"/>
        <end position="150"/>
    </location>
</feature>
<accession>C3W947</accession>
<evidence type="ECO:0000250" key="1"/>
<evidence type="ECO:0000269" key="2">
    <source>
    </source>
</evidence>
<evidence type="ECO:0000305" key="3"/>
<evidence type="ECO:0007829" key="4">
    <source>
        <dbReference type="PDB" id="3H0D"/>
    </source>
</evidence>
<reference key="1">
    <citation type="submission" date="2009-04" db="EMBL/GenBank/DDBJ databases">
        <title>Characterization of CtsR from Bacillus stearothermophilus.</title>
        <authorList>
            <person name="Fuhrmann J."/>
        </authorList>
    </citation>
    <scope>NUCLEOTIDE SEQUENCE [GENOMIC DNA]</scope>
    <source>
        <strain>ATCC 12980 / DSM 22 / CCM 2062 / JCM 2501 / NBRC 12550 / NCIMB 8923 / NCTC 10339 / R-35646 / VKM B-510</strain>
    </source>
</reference>
<reference key="2">
    <citation type="journal article" date="2009" name="Science">
        <title>McsB is a protein arginine kinase that phosphorylates and inhibits the heat-shock regulator CtsR.</title>
        <authorList>
            <person name="Fuhrmann J."/>
            <person name="Schmidt A."/>
            <person name="Spiess S."/>
            <person name="Lehner A."/>
            <person name="Turgay K."/>
            <person name="Mechtler K."/>
            <person name="Charpentier E."/>
            <person name="Clausen T."/>
        </authorList>
    </citation>
    <scope>X-RAY CRYSTALLOGRAPHY (2.40 ANGSTROMS) OF 2-153 IN COMPLEX WITH DNA</scope>
    <scope>REGULATION</scope>
    <scope>SUBUNIT</scope>
    <scope>DOMAIN</scope>
    <scope>PHOSPHORYLATION AT ARG-28; ARG-49 AND ARG-62</scope>
    <scope>MUTAGENESIS OF ARG-62</scope>
    <source>
        <strain>ATCC 12980 / DSM 22 / CCM 2062 / JCM 2501 / NBRC 12550 / NCIMB 8923 / NCTC 10339 / R-35646 / VKM B-510</strain>
    </source>
</reference>
<protein>
    <recommendedName>
        <fullName>Transcriptional regulator CtsR</fullName>
    </recommendedName>
    <alternativeName>
        <fullName>Class three stress gene repressor</fullName>
    </alternativeName>
</protein>
<dbReference type="EMBL" id="FN376878">
    <property type="protein sequence ID" value="CAY26036.1"/>
    <property type="molecule type" value="Genomic_DNA"/>
</dbReference>
<dbReference type="RefSeq" id="WP_033017268.1">
    <property type="nucleotide sequence ID" value="NZ_RCTK01000011.1"/>
</dbReference>
<dbReference type="PDB" id="3H0D">
    <property type="method" value="X-ray"/>
    <property type="resolution" value="2.40 A"/>
    <property type="chains" value="A/B=2-153"/>
</dbReference>
<dbReference type="PDBsum" id="3H0D"/>
<dbReference type="SMR" id="C3W947"/>
<dbReference type="iPTMnet" id="C3W947"/>
<dbReference type="GeneID" id="89612930"/>
<dbReference type="OrthoDB" id="1680813at2"/>
<dbReference type="EvolutionaryTrace" id="C3W947"/>
<dbReference type="GO" id="GO:0003677">
    <property type="term" value="F:DNA binding"/>
    <property type="evidence" value="ECO:0007669"/>
    <property type="project" value="UniProtKB-KW"/>
</dbReference>
<dbReference type="GO" id="GO:0006355">
    <property type="term" value="P:regulation of DNA-templated transcription"/>
    <property type="evidence" value="ECO:0007669"/>
    <property type="project" value="InterPro"/>
</dbReference>
<dbReference type="FunFam" id="3.30.56.130:FF:000001">
    <property type="entry name" value="Transcriptional regulator CtsR"/>
    <property type="match status" value="1"/>
</dbReference>
<dbReference type="Gene3D" id="1.10.1200.150">
    <property type="entry name" value="Transcriptional regulator CtsR, C-terminal domain"/>
    <property type="match status" value="1"/>
</dbReference>
<dbReference type="Gene3D" id="3.30.56.130">
    <property type="entry name" value="Transcriptional regulator CtsR, winged HTH domain"/>
    <property type="match status" value="1"/>
</dbReference>
<dbReference type="InterPro" id="IPR008463">
    <property type="entry name" value="CtsR"/>
</dbReference>
<dbReference type="InterPro" id="IPR041473">
    <property type="entry name" value="CtsR_C"/>
</dbReference>
<dbReference type="InterPro" id="IPR041908">
    <property type="entry name" value="CtsR_C_sf"/>
</dbReference>
<dbReference type="InterPro" id="IPR040465">
    <property type="entry name" value="CtsR_N"/>
</dbReference>
<dbReference type="InterPro" id="IPR041902">
    <property type="entry name" value="CtsR_N_sf"/>
</dbReference>
<dbReference type="Pfam" id="PF05848">
    <property type="entry name" value="CtsR"/>
    <property type="match status" value="1"/>
</dbReference>
<dbReference type="Pfam" id="PF17727">
    <property type="entry name" value="CtsR_C"/>
    <property type="match status" value="1"/>
</dbReference>
<dbReference type="PIRSF" id="PIRSF010607">
    <property type="entry name" value="Txn_repr_CtsR"/>
    <property type="match status" value="1"/>
</dbReference>
<gene>
    <name type="primary">ctsr</name>
</gene>
<proteinExistence type="evidence at protein level"/>